<reference key="1">
    <citation type="journal article" date="1999" name="Nature">
        <title>Sequence and analysis of chromosome 4 of the plant Arabidopsis thaliana.</title>
        <authorList>
            <person name="Mayer K.F.X."/>
            <person name="Schueller C."/>
            <person name="Wambutt R."/>
            <person name="Murphy G."/>
            <person name="Volckaert G."/>
            <person name="Pohl T."/>
            <person name="Duesterhoeft A."/>
            <person name="Stiekema W."/>
            <person name="Entian K.-D."/>
            <person name="Terryn N."/>
            <person name="Harris B."/>
            <person name="Ansorge W."/>
            <person name="Brandt P."/>
            <person name="Grivell L.A."/>
            <person name="Rieger M."/>
            <person name="Weichselgartner M."/>
            <person name="de Simone V."/>
            <person name="Obermaier B."/>
            <person name="Mache R."/>
            <person name="Mueller M."/>
            <person name="Kreis M."/>
            <person name="Delseny M."/>
            <person name="Puigdomenech P."/>
            <person name="Watson M."/>
            <person name="Schmidtheini T."/>
            <person name="Reichert B."/>
            <person name="Portetelle D."/>
            <person name="Perez-Alonso M."/>
            <person name="Boutry M."/>
            <person name="Bancroft I."/>
            <person name="Vos P."/>
            <person name="Hoheisel J."/>
            <person name="Zimmermann W."/>
            <person name="Wedler H."/>
            <person name="Ridley P."/>
            <person name="Langham S.-A."/>
            <person name="McCullagh B."/>
            <person name="Bilham L."/>
            <person name="Robben J."/>
            <person name="van der Schueren J."/>
            <person name="Grymonprez B."/>
            <person name="Chuang Y.-J."/>
            <person name="Vandenbussche F."/>
            <person name="Braeken M."/>
            <person name="Weltjens I."/>
            <person name="Voet M."/>
            <person name="Bastiaens I."/>
            <person name="Aert R."/>
            <person name="Defoor E."/>
            <person name="Weitzenegger T."/>
            <person name="Bothe G."/>
            <person name="Ramsperger U."/>
            <person name="Hilbert H."/>
            <person name="Braun M."/>
            <person name="Holzer E."/>
            <person name="Brandt A."/>
            <person name="Peters S."/>
            <person name="van Staveren M."/>
            <person name="Dirkse W."/>
            <person name="Mooijman P."/>
            <person name="Klein Lankhorst R."/>
            <person name="Rose M."/>
            <person name="Hauf J."/>
            <person name="Koetter P."/>
            <person name="Berneiser S."/>
            <person name="Hempel S."/>
            <person name="Feldpausch M."/>
            <person name="Lamberth S."/>
            <person name="Van den Daele H."/>
            <person name="De Keyser A."/>
            <person name="Buysshaert C."/>
            <person name="Gielen J."/>
            <person name="Villarroel R."/>
            <person name="De Clercq R."/>
            <person name="van Montagu M."/>
            <person name="Rogers J."/>
            <person name="Cronin A."/>
            <person name="Quail M.A."/>
            <person name="Bray-Allen S."/>
            <person name="Clark L."/>
            <person name="Doggett J."/>
            <person name="Hall S."/>
            <person name="Kay M."/>
            <person name="Lennard N."/>
            <person name="McLay K."/>
            <person name="Mayes R."/>
            <person name="Pettett A."/>
            <person name="Rajandream M.A."/>
            <person name="Lyne M."/>
            <person name="Benes V."/>
            <person name="Rechmann S."/>
            <person name="Borkova D."/>
            <person name="Bloecker H."/>
            <person name="Scharfe M."/>
            <person name="Grimm M."/>
            <person name="Loehnert T.-H."/>
            <person name="Dose S."/>
            <person name="de Haan M."/>
            <person name="Maarse A.C."/>
            <person name="Schaefer M."/>
            <person name="Mueller-Auer S."/>
            <person name="Gabel C."/>
            <person name="Fuchs M."/>
            <person name="Fartmann B."/>
            <person name="Granderath K."/>
            <person name="Dauner D."/>
            <person name="Herzl A."/>
            <person name="Neumann S."/>
            <person name="Argiriou A."/>
            <person name="Vitale D."/>
            <person name="Liguori R."/>
            <person name="Piravandi E."/>
            <person name="Massenet O."/>
            <person name="Quigley F."/>
            <person name="Clabauld G."/>
            <person name="Muendlein A."/>
            <person name="Felber R."/>
            <person name="Schnabl S."/>
            <person name="Hiller R."/>
            <person name="Schmidt W."/>
            <person name="Lecharny A."/>
            <person name="Aubourg S."/>
            <person name="Chefdor F."/>
            <person name="Cooke R."/>
            <person name="Berger C."/>
            <person name="Monfort A."/>
            <person name="Casacuberta E."/>
            <person name="Gibbons T."/>
            <person name="Weber N."/>
            <person name="Vandenbol M."/>
            <person name="Bargues M."/>
            <person name="Terol J."/>
            <person name="Torres A."/>
            <person name="Perez-Perez A."/>
            <person name="Purnelle B."/>
            <person name="Bent E."/>
            <person name="Johnson S."/>
            <person name="Tacon D."/>
            <person name="Jesse T."/>
            <person name="Heijnen L."/>
            <person name="Schwarz S."/>
            <person name="Scholler P."/>
            <person name="Heber S."/>
            <person name="Francs P."/>
            <person name="Bielke C."/>
            <person name="Frishman D."/>
            <person name="Haase D."/>
            <person name="Lemcke K."/>
            <person name="Mewes H.-W."/>
            <person name="Stocker S."/>
            <person name="Zaccaria P."/>
            <person name="Bevan M."/>
            <person name="Wilson R.K."/>
            <person name="de la Bastide M."/>
            <person name="Habermann K."/>
            <person name="Parnell L."/>
            <person name="Dedhia N."/>
            <person name="Gnoj L."/>
            <person name="Schutz K."/>
            <person name="Huang E."/>
            <person name="Spiegel L."/>
            <person name="Sekhon M."/>
            <person name="Murray J."/>
            <person name="Sheet P."/>
            <person name="Cordes M."/>
            <person name="Abu-Threideh J."/>
            <person name="Stoneking T."/>
            <person name="Kalicki J."/>
            <person name="Graves T."/>
            <person name="Harmon G."/>
            <person name="Edwards J."/>
            <person name="Latreille P."/>
            <person name="Courtney L."/>
            <person name="Cloud J."/>
            <person name="Abbott A."/>
            <person name="Scott K."/>
            <person name="Johnson D."/>
            <person name="Minx P."/>
            <person name="Bentley D."/>
            <person name="Fulton B."/>
            <person name="Miller N."/>
            <person name="Greco T."/>
            <person name="Kemp K."/>
            <person name="Kramer J."/>
            <person name="Fulton L."/>
            <person name="Mardis E."/>
            <person name="Dante M."/>
            <person name="Pepin K."/>
            <person name="Hillier L.W."/>
            <person name="Nelson J."/>
            <person name="Spieth J."/>
            <person name="Ryan E."/>
            <person name="Andrews S."/>
            <person name="Geisel C."/>
            <person name="Layman D."/>
            <person name="Du H."/>
            <person name="Ali J."/>
            <person name="Berghoff A."/>
            <person name="Jones K."/>
            <person name="Drone K."/>
            <person name="Cotton M."/>
            <person name="Joshu C."/>
            <person name="Antonoiu B."/>
            <person name="Zidanic M."/>
            <person name="Strong C."/>
            <person name="Sun H."/>
            <person name="Lamar B."/>
            <person name="Yordan C."/>
            <person name="Ma P."/>
            <person name="Zhong J."/>
            <person name="Preston R."/>
            <person name="Vil D."/>
            <person name="Shekher M."/>
            <person name="Matero A."/>
            <person name="Shah R."/>
            <person name="Swaby I.K."/>
            <person name="O'Shaughnessy A."/>
            <person name="Rodriguez M."/>
            <person name="Hoffman J."/>
            <person name="Till S."/>
            <person name="Granat S."/>
            <person name="Shohdy N."/>
            <person name="Hasegawa A."/>
            <person name="Hameed A."/>
            <person name="Lodhi M."/>
            <person name="Johnson A."/>
            <person name="Chen E."/>
            <person name="Marra M.A."/>
            <person name="Martienssen R."/>
            <person name="McCombie W.R."/>
        </authorList>
    </citation>
    <scope>NUCLEOTIDE SEQUENCE [LARGE SCALE GENOMIC DNA]</scope>
    <source>
        <strain>cv. Columbia</strain>
    </source>
</reference>
<reference key="2">
    <citation type="journal article" date="2017" name="Plant J.">
        <title>Araport11: a complete reannotation of the Arabidopsis thaliana reference genome.</title>
        <authorList>
            <person name="Cheng C.Y."/>
            <person name="Krishnakumar V."/>
            <person name="Chan A.P."/>
            <person name="Thibaud-Nissen F."/>
            <person name="Schobel S."/>
            <person name="Town C.D."/>
        </authorList>
    </citation>
    <scope>GENOME REANNOTATION</scope>
    <source>
        <strain>cv. Columbia</strain>
    </source>
</reference>
<reference key="3">
    <citation type="submission" date="2004-03" db="EMBL/GenBank/DDBJ databases">
        <title>Arabidopsis ORF clones.</title>
        <authorList>
            <person name="Cheuk R.F."/>
            <person name="Chen H."/>
            <person name="Kim C.J."/>
            <person name="Shinn P."/>
            <person name="Carninci P."/>
            <person name="Hayashizaki Y."/>
            <person name="Ishida J."/>
            <person name="Kamiya A."/>
            <person name="Kawai J."/>
            <person name="Narusaka M."/>
            <person name="Sakurai T."/>
            <person name="Satou M."/>
            <person name="Seki M."/>
            <person name="Shinozaki K."/>
            <person name="Ecker J.R."/>
        </authorList>
    </citation>
    <scope>NUCLEOTIDE SEQUENCE [LARGE SCALE MRNA] OF 1-351</scope>
    <source>
        <strain>cv. Columbia</strain>
    </source>
</reference>
<reference key="4">
    <citation type="journal article" date="2001" name="Plant Physiol.">
        <title>Phylogenetic relationships within cation transporter families of Arabidopsis.</title>
        <authorList>
            <person name="Maeser P."/>
            <person name="Thomine S."/>
            <person name="Schroeder J.I."/>
            <person name="Ward J.M."/>
            <person name="Hirschi K."/>
            <person name="Sze H."/>
            <person name="Talke I.N."/>
            <person name="Amtmann A."/>
            <person name="Maathuis F.J.M."/>
            <person name="Sanders D."/>
            <person name="Harper J.F."/>
            <person name="Tchieu J."/>
            <person name="Gribskov M."/>
            <person name="Persans M.W."/>
            <person name="Salt D.E."/>
            <person name="Kim S.A."/>
            <person name="Guerinot M.L."/>
        </authorList>
    </citation>
    <scope>GENE FAMILY</scope>
    <scope>NOMENCLATURE</scope>
</reference>
<accession>O49423</accession>
<accession>Q6NMA4</accession>
<keyword id="KW-0025">Alternative splicing</keyword>
<keyword id="KW-1003">Cell membrane</keyword>
<keyword id="KW-0406">Ion transport</keyword>
<keyword id="KW-0472">Membrane</keyword>
<keyword id="KW-0630">Potassium</keyword>
<keyword id="KW-0633">Potassium transport</keyword>
<keyword id="KW-1185">Reference proteome</keyword>
<keyword id="KW-0812">Transmembrane</keyword>
<keyword id="KW-1133">Transmembrane helix</keyword>
<keyword id="KW-0813">Transport</keyword>
<evidence type="ECO:0000255" key="1"/>
<evidence type="ECO:0000305" key="2"/>
<proteinExistence type="evidence at transcript level"/>
<sequence>MAERVEASSVPEGENTIEEREVGAMWELEQKLDQPMDEEANKLNNMYREKGLSMLMLLRLSFQSLGIVYGDLGTSPLYVFYNTFPDGIDDSEDVIGALSLIIYSLLLIPLIKYVFIVCKANDNGQGGTLAIYSLLCRHAKVKLIPNQHRSDEDLTTYSRTVSAEGSFAAKTKKWLEGKEWRKRALLVVVLLGTCMMIGDGILTPAISVLSATGGIKVNNPKMSGDIVVLVAIVILIGLFSMQHYGTDKVGWLFAPIVLIWFLFIGATGMYNICKYDTSVLKAFSPTYIYLYFKRRGRDGWISLGGILLSITGTEALYADIAYFPLLAIQLAFTFFVFPCLLLAYCGQAAYLVIHKEHYQDAFYASIPDSVYWPMFIVATGAAIVGSQATISGTYSIVKQAVAHGCFPRVKIVHTSKKFLGQIYCPDINWILMLGCIAVTASFKKQSQIGNAYGTAVVLVMLVTTLLMVLIMLLVWHCHWILVLIFTFLSFFVELSYFSAVIFKIDEGGWVPLIIAAISLLVMSVWHYATVKKYEFEMHSKVSMSWILGLGPSLGLVRVPGIGLVYTELASGVPHIFSHFITNLPAIHSVVVFVCVKYLPVYTVPEEERFLVKRIGPKTFRMFRCVARYGYKDLHKKDDDFENKLLTKLSSFIRIETMMEPTSNSSTYSSTYSVNHTQDSTVDLIHNNNNHNHNNNMDMFSSMVDYTVSTLDTIVSAESLHNTVSFSQDNTVEEEETDELEFLKTCKESGVVHIMGNTVVKARTGSWLPKKIAIDYVYAFLAKICRANSVILHVPHETLLNVGQVFYV</sequence>
<comment type="function">
    <text>Putative potassium transporter.</text>
</comment>
<comment type="subcellular location">
    <subcellularLocation>
        <location evidence="2">Cell membrane</location>
        <topology evidence="2">Multi-pass membrane protein</topology>
    </subcellularLocation>
</comment>
<comment type="alternative products">
    <event type="alternative splicing"/>
    <isoform>
        <id>O49423-1</id>
        <name>1</name>
        <sequence type="displayed"/>
    </isoform>
    <text>A number of isoforms are produced. According to EST sequences.</text>
</comment>
<comment type="similarity">
    <text evidence="2">Belongs to the HAK/KUP transporter (TC 2.A.72.3) family.</text>
</comment>
<comment type="sequence caution" evidence="2">
    <conflict type="erroneous gene model prediction">
        <sequence resource="EMBL-CDS" id="CAA16604"/>
    </conflict>
</comment>
<comment type="sequence caution" evidence="2">
    <conflict type="erroneous gene model prediction">
        <sequence resource="EMBL-CDS" id="CAB78996"/>
    </conflict>
</comment>
<feature type="chain" id="PRO_0000209085" description="Potassium transporter 9">
    <location>
        <begin position="1"/>
        <end position="807"/>
    </location>
</feature>
<feature type="topological domain" description="Cytoplasmic" evidence="1">
    <location>
        <begin position="1"/>
        <end position="59"/>
    </location>
</feature>
<feature type="transmembrane region" description="Helical" evidence="1">
    <location>
        <begin position="60"/>
        <end position="80"/>
    </location>
</feature>
<feature type="topological domain" description="Extracellular" evidence="1">
    <location>
        <begin position="81"/>
        <end position="96"/>
    </location>
</feature>
<feature type="transmembrane region" description="Helical" evidence="1">
    <location>
        <begin position="97"/>
        <end position="117"/>
    </location>
</feature>
<feature type="topological domain" description="Cytoplasmic" evidence="1">
    <location>
        <begin position="118"/>
        <end position="185"/>
    </location>
</feature>
<feature type="transmembrane region" description="Helical" evidence="1">
    <location>
        <begin position="186"/>
        <end position="206"/>
    </location>
</feature>
<feature type="topological domain" description="Extracellular" evidence="1">
    <location>
        <begin position="207"/>
        <end position="225"/>
    </location>
</feature>
<feature type="transmembrane region" description="Helical" evidence="1">
    <location>
        <begin position="226"/>
        <end position="246"/>
    </location>
</feature>
<feature type="topological domain" description="Cytoplasmic" evidence="1">
    <location>
        <begin position="247"/>
        <end position="248"/>
    </location>
</feature>
<feature type="transmembrane region" description="Helical" evidence="1">
    <location>
        <begin position="249"/>
        <end position="269"/>
    </location>
</feature>
<feature type="topological domain" description="Extracellular" evidence="1">
    <location>
        <begin position="270"/>
        <end position="299"/>
    </location>
</feature>
<feature type="transmembrane region" description="Helical" evidence="1">
    <location>
        <begin position="300"/>
        <end position="320"/>
    </location>
</feature>
<feature type="topological domain" description="Cytoplasmic" evidence="1">
    <location>
        <begin position="321"/>
        <end position="322"/>
    </location>
</feature>
<feature type="transmembrane region" description="Helical" evidence="1">
    <location>
        <begin position="323"/>
        <end position="343"/>
    </location>
</feature>
<feature type="topological domain" description="Extracellular" evidence="1">
    <location>
        <begin position="344"/>
        <end position="369"/>
    </location>
</feature>
<feature type="transmembrane region" description="Helical" evidence="1">
    <location>
        <begin position="370"/>
        <end position="390"/>
    </location>
</feature>
<feature type="topological domain" description="Cytoplasmic" evidence="1">
    <location>
        <begin position="391"/>
        <end position="417"/>
    </location>
</feature>
<feature type="transmembrane region" description="Helical" evidence="1">
    <location>
        <begin position="418"/>
        <end position="438"/>
    </location>
</feature>
<feature type="topological domain" description="Extracellular" evidence="1">
    <location>
        <begin position="439"/>
        <end position="454"/>
    </location>
</feature>
<feature type="transmembrane region" description="Helical" evidence="1">
    <location>
        <begin position="455"/>
        <end position="475"/>
    </location>
</feature>
<feature type="topological domain" description="Cytoplasmic" evidence="1">
    <location>
        <begin position="476"/>
        <end position="481"/>
    </location>
</feature>
<feature type="transmembrane region" description="Helical" evidence="1">
    <location>
        <begin position="482"/>
        <end position="502"/>
    </location>
</feature>
<feature type="topological domain" description="Extracellular" evidence="1">
    <location>
        <begin position="503"/>
        <end position="507"/>
    </location>
</feature>
<feature type="transmembrane region" description="Helical" evidence="1">
    <location>
        <begin position="508"/>
        <end position="528"/>
    </location>
</feature>
<feature type="topological domain" description="Cytoplasmic" evidence="1">
    <location>
        <begin position="529"/>
        <end position="807"/>
    </location>
</feature>
<feature type="sequence conflict" description="In Ref. 3; AAS49121." evidence="2" ref="3">
    <original>AAYL</original>
    <variation>VFMF</variation>
    <location>
        <begin position="348"/>
        <end position="351"/>
    </location>
</feature>
<name>POT9_ARATH</name>
<organism>
    <name type="scientific">Arabidopsis thaliana</name>
    <name type="common">Mouse-ear cress</name>
    <dbReference type="NCBI Taxonomy" id="3702"/>
    <lineage>
        <taxon>Eukaryota</taxon>
        <taxon>Viridiplantae</taxon>
        <taxon>Streptophyta</taxon>
        <taxon>Embryophyta</taxon>
        <taxon>Tracheophyta</taxon>
        <taxon>Spermatophyta</taxon>
        <taxon>Magnoliopsida</taxon>
        <taxon>eudicotyledons</taxon>
        <taxon>Gunneridae</taxon>
        <taxon>Pentapetalae</taxon>
        <taxon>rosids</taxon>
        <taxon>malvids</taxon>
        <taxon>Brassicales</taxon>
        <taxon>Brassicaceae</taxon>
        <taxon>Camelineae</taxon>
        <taxon>Arabidopsis</taxon>
    </lineage>
</organism>
<dbReference type="EMBL" id="AL021637">
    <property type="protein sequence ID" value="CAA16604.1"/>
    <property type="status" value="ALT_SEQ"/>
    <property type="molecule type" value="Genomic_DNA"/>
</dbReference>
<dbReference type="EMBL" id="AL161552">
    <property type="protein sequence ID" value="CAB78996.1"/>
    <property type="status" value="ALT_SEQ"/>
    <property type="molecule type" value="Genomic_DNA"/>
</dbReference>
<dbReference type="EMBL" id="CP002687">
    <property type="protein sequence ID" value="AEE84252.1"/>
    <property type="molecule type" value="Genomic_DNA"/>
</dbReference>
<dbReference type="EMBL" id="BT011758">
    <property type="protein sequence ID" value="AAS49121.1"/>
    <property type="molecule type" value="mRNA"/>
</dbReference>
<dbReference type="PIR" id="T04880">
    <property type="entry name" value="T04880"/>
</dbReference>
<dbReference type="RefSeq" id="NP_001190775.1">
    <molecule id="O49423-1"/>
    <property type="nucleotide sequence ID" value="NM_001203846.2"/>
</dbReference>
<dbReference type="BioGRID" id="13033">
    <property type="interactions" value="1"/>
</dbReference>
<dbReference type="FunCoup" id="O49423">
    <property type="interactions" value="14"/>
</dbReference>
<dbReference type="IntAct" id="O49423">
    <property type="interactions" value="1"/>
</dbReference>
<dbReference type="STRING" id="3702.O49423"/>
<dbReference type="TCDB" id="2.A.72.3.12">
    <property type="family name" value="the k(+) uptake permease (kup) family"/>
</dbReference>
<dbReference type="PaxDb" id="3702-AT4G19960.1"/>
<dbReference type="EnsemblPlants" id="AT4G19960.2">
    <molecule id="O49423-1"/>
    <property type="protein sequence ID" value="AT4G19960.2"/>
    <property type="gene ID" value="AT4G19960"/>
</dbReference>
<dbReference type="GeneID" id="827740"/>
<dbReference type="Gramene" id="AT4G19960.2">
    <molecule id="O49423-1"/>
    <property type="protein sequence ID" value="AT4G19960.2"/>
    <property type="gene ID" value="AT4G19960"/>
</dbReference>
<dbReference type="KEGG" id="ath:AT4G19960"/>
<dbReference type="Araport" id="AT4G19960"/>
<dbReference type="TAIR" id="AT4G19960">
    <property type="gene designation" value="KUP9"/>
</dbReference>
<dbReference type="eggNOG" id="ENOG502QPSA">
    <property type="taxonomic scope" value="Eukaryota"/>
</dbReference>
<dbReference type="InParanoid" id="O49423"/>
<dbReference type="PhylomeDB" id="O49423"/>
<dbReference type="PRO" id="PR:O49423"/>
<dbReference type="Proteomes" id="UP000006548">
    <property type="component" value="Chromosome 4"/>
</dbReference>
<dbReference type="ExpressionAtlas" id="O49423">
    <property type="expression patterns" value="baseline and differential"/>
</dbReference>
<dbReference type="GO" id="GO:0005886">
    <property type="term" value="C:plasma membrane"/>
    <property type="evidence" value="ECO:0007669"/>
    <property type="project" value="UniProtKB-SubCell"/>
</dbReference>
<dbReference type="GO" id="GO:0015079">
    <property type="term" value="F:potassium ion transmembrane transporter activity"/>
    <property type="evidence" value="ECO:0007669"/>
    <property type="project" value="InterPro"/>
</dbReference>
<dbReference type="InterPro" id="IPR003855">
    <property type="entry name" value="K+_transporter"/>
</dbReference>
<dbReference type="InterPro" id="IPR053952">
    <property type="entry name" value="K_trans_C"/>
</dbReference>
<dbReference type="InterPro" id="IPR053951">
    <property type="entry name" value="K_trans_N"/>
</dbReference>
<dbReference type="NCBIfam" id="TIGR00794">
    <property type="entry name" value="kup"/>
    <property type="match status" value="1"/>
</dbReference>
<dbReference type="PANTHER" id="PTHR30540">
    <property type="entry name" value="OSMOTIC STRESS POTASSIUM TRANSPORTER"/>
    <property type="match status" value="1"/>
</dbReference>
<dbReference type="PANTHER" id="PTHR30540:SF85">
    <property type="entry name" value="POTASSIUM TRANSPORTER 9"/>
    <property type="match status" value="1"/>
</dbReference>
<dbReference type="Pfam" id="PF02705">
    <property type="entry name" value="K_trans"/>
    <property type="match status" value="1"/>
</dbReference>
<dbReference type="Pfam" id="PF22776">
    <property type="entry name" value="K_trans_C"/>
    <property type="match status" value="1"/>
</dbReference>
<gene>
    <name type="primary">POT9</name>
    <name type="synonym">KUP9</name>
    <name type="ordered locus">At4g19960</name>
    <name type="ORF">F18F4.60</name>
</gene>
<protein>
    <recommendedName>
        <fullName>Potassium transporter 9</fullName>
        <shortName>AtPOT9</shortName>
    </recommendedName>
</protein>